<gene>
    <name evidence="1" type="primary">ileS</name>
    <name type="ordered locus">UNCMA_23590</name>
    <name type="ORF">RCIX379</name>
</gene>
<sequence length="1104" mass="125895">MIQEEKEQYSSKSLEAGVDELWRASDAYALTRKKRLGSKRFFFVDGPPYTTGRIHLGTAWNKIIKDSVLRYRSMNGYDLIDRPGWDMHGLPIEVKVESILGFKTKKDIEEFGVARFTEECKKFAIGNMHEMTSQFKKLGVWMNWDDPYMTLKNEYIEAAWWTIKQAHEKHLLERGLRNVNWCPRCETAIADSEVEYADRKDDSIYVKFPLKNEEGFLVIWTTTPWTIPANMAVAANKDFTYAMVYALPAAVLEEAAMQAGLDHTTLVEHHSDGRPKPMRYSDKVAKMKEAIGEEKVKELYEKHGEKLIIARDLVDGVLKMGRYADYQVLKTMTGEELKGTEYVHPLADLIPCQKETEHKVYLADFVVGENTGMVHIAPGHGFDDFELGLKEGIRAYCPVKANGHYDDSVGAYAGMEIREANPKIMEDLRQRNLLLGATTIEHRYGHCWRCKTPIIFLTTDQWFIAVSKMKEDMLAEVKRVNWYPDWAGSARFYDWVNGARDWCVSRQRYWGIPIPIWKCEKCGSLDVIGTKEELERKVGREVPDLHRPFVDEVRLECECGGSMRRVEDIFDVWFDSAVASWATLHFPGRKDLMDWWPADFIVEGHDQTRGWFYSQLGAGMVGFGKAPYNGVCMHGFTLDETGKKMSKSLGNVVAPEDVVEKLGADTLRLYVLSQNAPWEDLSFSWEECGNINRAINIFWNVYRFPLPYMVLDKFDPAKVTLESVKGSLRVEDRWILSKLQAVIKDVDTYMATYELHRATRSIISFILEDLSRWYVQLARERTWVEADDPDKLAAYRVLYDTLVTTVKLIAPFTPYIAERMYQNLVRNVSAEAPVSVHMCDWPVVDSSLLDEQLNRDMDIARKIVEASSNARQKAKRKLRWPVQKIVVAAENPDVVTAVKDLSGVIGEQTNSKEVVVLAPGEANTELGVEVVPNPKLIGPIFKAVAGKVTAALKEADGRAVKKAIEEEKKYIVEIPEGSFDILLDMVSFRDVIPESLAMADFPGGKVYVDVTLSKELEAEGYTRELIRRIQDMRKEMNLNVEDRIKVEVYVGDEKVLDLVKSMKDYAAGEVRADTLDLKTEKPAAGFVKDWDVEGIPMTIGLEKI</sequence>
<organism>
    <name type="scientific">Methanocella arvoryzae (strain DSM 22066 / NBRC 105507 / MRE50)</name>
    <dbReference type="NCBI Taxonomy" id="351160"/>
    <lineage>
        <taxon>Archaea</taxon>
        <taxon>Methanobacteriati</taxon>
        <taxon>Methanobacteriota</taxon>
        <taxon>Stenosarchaea group</taxon>
        <taxon>Methanomicrobia</taxon>
        <taxon>Methanocellales</taxon>
        <taxon>Methanocellaceae</taxon>
        <taxon>Methanocella</taxon>
    </lineage>
</organism>
<accession>Q0W720</accession>
<dbReference type="EC" id="6.1.1.5" evidence="1"/>
<dbReference type="EMBL" id="AM114193">
    <property type="protein sequence ID" value="CAJ35823.1"/>
    <property type="molecule type" value="Genomic_DNA"/>
</dbReference>
<dbReference type="RefSeq" id="WP_012036678.1">
    <property type="nucleotide sequence ID" value="NC_009464.1"/>
</dbReference>
<dbReference type="SMR" id="Q0W720"/>
<dbReference type="STRING" id="351160.RCIX379"/>
<dbReference type="GeneID" id="5145666"/>
<dbReference type="KEGG" id="rci:RCIX379"/>
<dbReference type="PATRIC" id="fig|351160.9.peg.2409"/>
<dbReference type="eggNOG" id="arCOG00807">
    <property type="taxonomic scope" value="Archaea"/>
</dbReference>
<dbReference type="OrthoDB" id="30823at2157"/>
<dbReference type="Proteomes" id="UP000000663">
    <property type="component" value="Chromosome"/>
</dbReference>
<dbReference type="GO" id="GO:0005737">
    <property type="term" value="C:cytoplasm"/>
    <property type="evidence" value="ECO:0007669"/>
    <property type="project" value="UniProtKB-SubCell"/>
</dbReference>
<dbReference type="GO" id="GO:0002161">
    <property type="term" value="F:aminoacyl-tRNA deacylase activity"/>
    <property type="evidence" value="ECO:0007669"/>
    <property type="project" value="InterPro"/>
</dbReference>
<dbReference type="GO" id="GO:0005524">
    <property type="term" value="F:ATP binding"/>
    <property type="evidence" value="ECO:0007669"/>
    <property type="project" value="UniProtKB-UniRule"/>
</dbReference>
<dbReference type="GO" id="GO:0004822">
    <property type="term" value="F:isoleucine-tRNA ligase activity"/>
    <property type="evidence" value="ECO:0007669"/>
    <property type="project" value="UniProtKB-UniRule"/>
</dbReference>
<dbReference type="GO" id="GO:0000049">
    <property type="term" value="F:tRNA binding"/>
    <property type="evidence" value="ECO:0007669"/>
    <property type="project" value="InterPro"/>
</dbReference>
<dbReference type="GO" id="GO:0008270">
    <property type="term" value="F:zinc ion binding"/>
    <property type="evidence" value="ECO:0007669"/>
    <property type="project" value="UniProtKB-UniRule"/>
</dbReference>
<dbReference type="GO" id="GO:0006428">
    <property type="term" value="P:isoleucyl-tRNA aminoacylation"/>
    <property type="evidence" value="ECO:0007669"/>
    <property type="project" value="UniProtKB-UniRule"/>
</dbReference>
<dbReference type="CDD" id="cd07961">
    <property type="entry name" value="Anticodon_Ia_Ile_ABEc"/>
    <property type="match status" value="1"/>
</dbReference>
<dbReference type="CDD" id="cd00818">
    <property type="entry name" value="IleRS_core"/>
    <property type="match status" value="1"/>
</dbReference>
<dbReference type="FunFam" id="3.40.50.620:FF:000286">
    <property type="entry name" value="Isoleucine--tRNA ligase"/>
    <property type="match status" value="1"/>
</dbReference>
<dbReference type="FunFam" id="1.10.730.10:FF:000033">
    <property type="entry name" value="Valine--tRNA ligase"/>
    <property type="match status" value="1"/>
</dbReference>
<dbReference type="Gene3D" id="3.30.720.200">
    <property type="match status" value="1"/>
</dbReference>
<dbReference type="Gene3D" id="3.40.50.620">
    <property type="entry name" value="HUPs"/>
    <property type="match status" value="2"/>
</dbReference>
<dbReference type="Gene3D" id="1.10.730.10">
    <property type="entry name" value="Isoleucyl-tRNA Synthetase, Domain 1"/>
    <property type="match status" value="1"/>
</dbReference>
<dbReference type="HAMAP" id="MF_02003">
    <property type="entry name" value="Ile_tRNA_synth_type2"/>
    <property type="match status" value="1"/>
</dbReference>
<dbReference type="InterPro" id="IPR001412">
    <property type="entry name" value="aa-tRNA-synth_I_CS"/>
</dbReference>
<dbReference type="InterPro" id="IPR002300">
    <property type="entry name" value="aa-tRNA-synth_Ia"/>
</dbReference>
<dbReference type="InterPro" id="IPR033709">
    <property type="entry name" value="Anticodon_Ile_ABEc"/>
</dbReference>
<dbReference type="InterPro" id="IPR002301">
    <property type="entry name" value="Ile-tRNA-ligase"/>
</dbReference>
<dbReference type="InterPro" id="IPR023586">
    <property type="entry name" value="Ile-tRNA-ligase_type2"/>
</dbReference>
<dbReference type="InterPro" id="IPR013155">
    <property type="entry name" value="M/V/L/I-tRNA-synth_anticd-bd"/>
</dbReference>
<dbReference type="InterPro" id="IPR014729">
    <property type="entry name" value="Rossmann-like_a/b/a_fold"/>
</dbReference>
<dbReference type="InterPro" id="IPR009080">
    <property type="entry name" value="tRNAsynth_Ia_anticodon-bd"/>
</dbReference>
<dbReference type="InterPro" id="IPR009008">
    <property type="entry name" value="Val/Leu/Ile-tRNA-synth_edit"/>
</dbReference>
<dbReference type="NCBIfam" id="TIGR00392">
    <property type="entry name" value="ileS"/>
    <property type="match status" value="1"/>
</dbReference>
<dbReference type="PANTHER" id="PTHR42780:SF1">
    <property type="entry name" value="ISOLEUCINE--TRNA LIGASE, CYTOPLASMIC"/>
    <property type="match status" value="1"/>
</dbReference>
<dbReference type="PANTHER" id="PTHR42780">
    <property type="entry name" value="SOLEUCYL-TRNA SYNTHETASE"/>
    <property type="match status" value="1"/>
</dbReference>
<dbReference type="Pfam" id="PF08264">
    <property type="entry name" value="Anticodon_1"/>
    <property type="match status" value="1"/>
</dbReference>
<dbReference type="Pfam" id="PF19302">
    <property type="entry name" value="DUF5915"/>
    <property type="match status" value="1"/>
</dbReference>
<dbReference type="Pfam" id="PF00133">
    <property type="entry name" value="tRNA-synt_1"/>
    <property type="match status" value="1"/>
</dbReference>
<dbReference type="PRINTS" id="PR00984">
    <property type="entry name" value="TRNASYNTHILE"/>
</dbReference>
<dbReference type="SUPFAM" id="SSF47323">
    <property type="entry name" value="Anticodon-binding domain of a subclass of class I aminoacyl-tRNA synthetases"/>
    <property type="match status" value="2"/>
</dbReference>
<dbReference type="SUPFAM" id="SSF52374">
    <property type="entry name" value="Nucleotidylyl transferase"/>
    <property type="match status" value="1"/>
</dbReference>
<dbReference type="SUPFAM" id="SSF50677">
    <property type="entry name" value="ValRS/IleRS/LeuRS editing domain"/>
    <property type="match status" value="1"/>
</dbReference>
<dbReference type="PROSITE" id="PS00178">
    <property type="entry name" value="AA_TRNA_LIGASE_I"/>
    <property type="match status" value="1"/>
</dbReference>
<feature type="chain" id="PRO_1000022161" description="Isoleucine--tRNA ligase">
    <location>
        <begin position="1"/>
        <end position="1104"/>
    </location>
</feature>
<feature type="short sequence motif" description="'HIGH' region">
    <location>
        <begin position="48"/>
        <end position="58"/>
    </location>
</feature>
<feature type="short sequence motif" description="'KMSKS' region">
    <location>
        <begin position="644"/>
        <end position="648"/>
    </location>
</feature>
<feature type="binding site" evidence="1">
    <location>
        <position position="647"/>
    </location>
    <ligand>
        <name>ATP</name>
        <dbReference type="ChEBI" id="CHEBI:30616"/>
    </ligand>
</feature>
<evidence type="ECO:0000255" key="1">
    <source>
        <dbReference type="HAMAP-Rule" id="MF_02003"/>
    </source>
</evidence>
<name>SYI_METAR</name>
<comment type="function">
    <text evidence="1">Catalyzes the attachment of isoleucine to tRNA(Ile). As IleRS can inadvertently accommodate and process structurally similar amino acids such as valine, to avoid such errors it has two additional distinct tRNA(Ile)-dependent editing activities. One activity is designated as 'pretransfer' editing and involves the hydrolysis of activated Val-AMP. The other activity is designated 'posttransfer' editing and involves deacylation of mischarged Val-tRNA(Ile).</text>
</comment>
<comment type="catalytic activity">
    <reaction evidence="1">
        <text>tRNA(Ile) + L-isoleucine + ATP = L-isoleucyl-tRNA(Ile) + AMP + diphosphate</text>
        <dbReference type="Rhea" id="RHEA:11060"/>
        <dbReference type="Rhea" id="RHEA-COMP:9666"/>
        <dbReference type="Rhea" id="RHEA-COMP:9695"/>
        <dbReference type="ChEBI" id="CHEBI:30616"/>
        <dbReference type="ChEBI" id="CHEBI:33019"/>
        <dbReference type="ChEBI" id="CHEBI:58045"/>
        <dbReference type="ChEBI" id="CHEBI:78442"/>
        <dbReference type="ChEBI" id="CHEBI:78528"/>
        <dbReference type="ChEBI" id="CHEBI:456215"/>
        <dbReference type="EC" id="6.1.1.5"/>
    </reaction>
</comment>
<comment type="cofactor">
    <cofactor evidence="1">
        <name>Zn(2+)</name>
        <dbReference type="ChEBI" id="CHEBI:29105"/>
    </cofactor>
</comment>
<comment type="subunit">
    <text evidence="1">Monomer.</text>
</comment>
<comment type="subcellular location">
    <subcellularLocation>
        <location evidence="1">Cytoplasm</location>
    </subcellularLocation>
</comment>
<comment type="domain">
    <text evidence="1">IleRS has two distinct active sites: one for aminoacylation and one for editing. The misactivated valine is translocated from the active site to the editing site, which sterically excludes the correctly activated isoleucine. The single editing site contains two valyl binding pockets, one specific for each substrate (Val-AMP or Val-tRNA(Ile)).</text>
</comment>
<comment type="similarity">
    <text evidence="1">Belongs to the class-I aminoacyl-tRNA synthetase family. IleS type 2 subfamily.</text>
</comment>
<proteinExistence type="inferred from homology"/>
<reference key="1">
    <citation type="journal article" date="2006" name="Science">
        <title>Genome of rice cluster I archaea -- the key methane producers in the rice rhizosphere.</title>
        <authorList>
            <person name="Erkel C."/>
            <person name="Kube M."/>
            <person name="Reinhardt R."/>
            <person name="Liesack W."/>
        </authorList>
    </citation>
    <scope>NUCLEOTIDE SEQUENCE [LARGE SCALE GENOMIC DNA]</scope>
    <source>
        <strain>DSM 22066 / NBRC 105507 / MRE50</strain>
    </source>
</reference>
<protein>
    <recommendedName>
        <fullName evidence="1">Isoleucine--tRNA ligase</fullName>
        <ecNumber evidence="1">6.1.1.5</ecNumber>
    </recommendedName>
    <alternativeName>
        <fullName evidence="1">Isoleucyl-tRNA synthetase</fullName>
        <shortName evidence="1">IleRS</shortName>
    </alternativeName>
</protein>
<keyword id="KW-0030">Aminoacyl-tRNA synthetase</keyword>
<keyword id="KW-0067">ATP-binding</keyword>
<keyword id="KW-0963">Cytoplasm</keyword>
<keyword id="KW-0436">Ligase</keyword>
<keyword id="KW-0479">Metal-binding</keyword>
<keyword id="KW-0547">Nucleotide-binding</keyword>
<keyword id="KW-0648">Protein biosynthesis</keyword>
<keyword id="KW-1185">Reference proteome</keyword>
<keyword id="KW-0862">Zinc</keyword>